<dbReference type="EMBL" id="BC026948">
    <property type="protein sequence ID" value="AAH26948.1"/>
    <property type="molecule type" value="mRNA"/>
</dbReference>
<dbReference type="CCDS" id="CCDS24374.1"/>
<dbReference type="RefSeq" id="NP_666125.1">
    <property type="nucleotide sequence ID" value="NM_146013.1"/>
</dbReference>
<dbReference type="SMR" id="Q8R0F9"/>
<dbReference type="BioGRID" id="222134">
    <property type="interactions" value="1"/>
</dbReference>
<dbReference type="FunCoup" id="Q8R0F9">
    <property type="interactions" value="490"/>
</dbReference>
<dbReference type="STRING" id="10090.ENSMUSP00000019512"/>
<dbReference type="iPTMnet" id="Q8R0F9"/>
<dbReference type="PhosphoSitePlus" id="Q8R0F9"/>
<dbReference type="SwissPalm" id="Q8R0F9"/>
<dbReference type="jPOST" id="Q8R0F9"/>
<dbReference type="PaxDb" id="10090-ENSMUSP00000019512"/>
<dbReference type="PeptideAtlas" id="Q8R0F9"/>
<dbReference type="ProteomicsDB" id="253350"/>
<dbReference type="Antibodypedia" id="45388">
    <property type="antibodies" value="106 antibodies from 20 providers"/>
</dbReference>
<dbReference type="DNASU" id="103655"/>
<dbReference type="Ensembl" id="ENSMUST00000019512.8">
    <property type="protein sequence ID" value="ENSMUSP00000019512.8"/>
    <property type="gene ID" value="ENSMUSG00000019368.14"/>
</dbReference>
<dbReference type="GeneID" id="103655"/>
<dbReference type="KEGG" id="mmu:103655"/>
<dbReference type="UCSC" id="uc007hue.1">
    <property type="organism name" value="mouse"/>
</dbReference>
<dbReference type="AGR" id="MGI:2144095"/>
<dbReference type="CTD" id="284904"/>
<dbReference type="MGI" id="MGI:2144095">
    <property type="gene designation" value="Sec14l4"/>
</dbReference>
<dbReference type="VEuPathDB" id="HostDB:ENSMUSG00000019368"/>
<dbReference type="eggNOG" id="KOG1471">
    <property type="taxonomic scope" value="Eukaryota"/>
</dbReference>
<dbReference type="GeneTree" id="ENSGT00940000162471"/>
<dbReference type="HOGENOM" id="CLU_014001_2_1_1"/>
<dbReference type="InParanoid" id="Q8R0F9"/>
<dbReference type="OMA" id="YDHEGCP"/>
<dbReference type="OrthoDB" id="1434354at2759"/>
<dbReference type="PhylomeDB" id="Q8R0F9"/>
<dbReference type="TreeFam" id="TF313988"/>
<dbReference type="BioGRID-ORCS" id="103655">
    <property type="hits" value="3 hits in 82 CRISPR screens"/>
</dbReference>
<dbReference type="ChiTaRS" id="Sec14l4">
    <property type="organism name" value="mouse"/>
</dbReference>
<dbReference type="PRO" id="PR:Q8R0F9"/>
<dbReference type="Proteomes" id="UP000000589">
    <property type="component" value="Chromosome 11"/>
</dbReference>
<dbReference type="RNAct" id="Q8R0F9">
    <property type="molecule type" value="protein"/>
</dbReference>
<dbReference type="Bgee" id="ENSMUSG00000019368">
    <property type="expression patterns" value="Expressed in lip and 57 other cell types or tissues"/>
</dbReference>
<dbReference type="GO" id="GO:0008289">
    <property type="term" value="F:lipid binding"/>
    <property type="evidence" value="ECO:0007669"/>
    <property type="project" value="UniProtKB-KW"/>
</dbReference>
<dbReference type="CDD" id="cd00170">
    <property type="entry name" value="SEC14"/>
    <property type="match status" value="1"/>
</dbReference>
<dbReference type="FunFam" id="3.40.525.10:FF:000009">
    <property type="entry name" value="SEC14-like 2 (S. cerevisiae)"/>
    <property type="match status" value="1"/>
</dbReference>
<dbReference type="Gene3D" id="3.40.525.10">
    <property type="entry name" value="CRAL-TRIO lipid binding domain"/>
    <property type="match status" value="1"/>
</dbReference>
<dbReference type="Gene3D" id="2.60.120.680">
    <property type="entry name" value="GOLD domain"/>
    <property type="match status" value="1"/>
</dbReference>
<dbReference type="InterPro" id="IPR001251">
    <property type="entry name" value="CRAL-TRIO_dom"/>
</dbReference>
<dbReference type="InterPro" id="IPR036865">
    <property type="entry name" value="CRAL-TRIO_dom_sf"/>
</dbReference>
<dbReference type="InterPro" id="IPR011074">
    <property type="entry name" value="CRAL/TRIO_N_dom"/>
</dbReference>
<dbReference type="InterPro" id="IPR036273">
    <property type="entry name" value="CRAL/TRIO_N_dom_sf"/>
</dbReference>
<dbReference type="InterPro" id="IPR009038">
    <property type="entry name" value="GOLD_dom"/>
</dbReference>
<dbReference type="InterPro" id="IPR036598">
    <property type="entry name" value="GOLD_dom_sf"/>
</dbReference>
<dbReference type="InterPro" id="IPR051064">
    <property type="entry name" value="SEC14/CRAL-TRIO_domain"/>
</dbReference>
<dbReference type="PANTHER" id="PTHR23324">
    <property type="entry name" value="SEC14 RELATED PROTEIN"/>
    <property type="match status" value="1"/>
</dbReference>
<dbReference type="PANTHER" id="PTHR23324:SF42">
    <property type="entry name" value="SEC14-LIKE PROTEIN 4"/>
    <property type="match status" value="1"/>
</dbReference>
<dbReference type="Pfam" id="PF00650">
    <property type="entry name" value="CRAL_TRIO"/>
    <property type="match status" value="1"/>
</dbReference>
<dbReference type="Pfam" id="PF03765">
    <property type="entry name" value="CRAL_TRIO_N"/>
    <property type="match status" value="1"/>
</dbReference>
<dbReference type="PRINTS" id="PR00180">
    <property type="entry name" value="CRETINALDHBP"/>
</dbReference>
<dbReference type="SMART" id="SM01100">
    <property type="entry name" value="CRAL_TRIO_N"/>
    <property type="match status" value="1"/>
</dbReference>
<dbReference type="SMART" id="SM00516">
    <property type="entry name" value="SEC14"/>
    <property type="match status" value="1"/>
</dbReference>
<dbReference type="SUPFAM" id="SSF52087">
    <property type="entry name" value="CRAL/TRIO domain"/>
    <property type="match status" value="1"/>
</dbReference>
<dbReference type="SUPFAM" id="SSF46938">
    <property type="entry name" value="CRAL/TRIO N-terminal domain"/>
    <property type="match status" value="1"/>
</dbReference>
<dbReference type="SUPFAM" id="SSF101576">
    <property type="entry name" value="Supernatant protein factor (SPF), C-terminal domain"/>
    <property type="match status" value="1"/>
</dbReference>
<dbReference type="PROSITE" id="PS50191">
    <property type="entry name" value="CRAL_TRIO"/>
    <property type="match status" value="1"/>
</dbReference>
<dbReference type="PROSITE" id="PS50866">
    <property type="entry name" value="GOLD"/>
    <property type="match status" value="1"/>
</dbReference>
<proteinExistence type="evidence at protein level"/>
<sequence length="403" mass="46053">MRGQVGDLSPQQQEALARFRETLQDLLPTLPKADDYFLLRWLRARNFDLKKSEDMLRKHVEFRNQQNLDQILTWQAPEVIQLYDSGGLSGYDYEGCPVWFDIIGTMDPKGLFMSASKQDMIRKRIKVCEMLLHECELQSQKLGRKIERMVMVFDMEGLSLRHLWKPAVEVYQQFFAILEANYPETVKNLIIIRAPKLFPVAFNLVKSFMGEETQKKIVILGGNWKQELVKFVSPDQLPVEFGGTMTDPDGNPKCLTKINYGGEVPKRYYLSNQERPQYEHSVVVGRGSSHQVENEILFPGCVLRWQFASDGGDIGFGVFLKTRMGERQKAGEMVEVLPSQRYNAHMVPEDGSLNCLKAGVYVLRFDNTYSLLHTKKVGYTAEVLLPDKACEEKLQGLGSVSPP</sequence>
<accession>Q8R0F9</accession>
<gene>
    <name type="primary">Sec14l4</name>
</gene>
<keyword id="KW-0446">Lipid-binding</keyword>
<keyword id="KW-1185">Reference proteome</keyword>
<keyword id="KW-0813">Transport</keyword>
<comment type="function">
    <text evidence="1">Probable hydrophobic ligand-binding protein; may play a role in the transport of hydrophobic ligands like tocopherol, squalene and phospholipids.</text>
</comment>
<name>S14L4_MOUSE</name>
<evidence type="ECO:0000250" key="1"/>
<evidence type="ECO:0000255" key="2">
    <source>
        <dbReference type="PROSITE-ProRule" id="PRU00056"/>
    </source>
</evidence>
<evidence type="ECO:0000255" key="3">
    <source>
        <dbReference type="PROSITE-ProRule" id="PRU00096"/>
    </source>
</evidence>
<reference key="1">
    <citation type="journal article" date="2004" name="Genome Res.">
        <title>The status, quality, and expansion of the NIH full-length cDNA project: the Mammalian Gene Collection (MGC).</title>
        <authorList>
            <consortium name="The MGC Project Team"/>
        </authorList>
    </citation>
    <scope>NUCLEOTIDE SEQUENCE [LARGE SCALE MRNA]</scope>
    <source>
        <tissue>Liver</tissue>
    </source>
</reference>
<reference key="2">
    <citation type="journal article" date="2010" name="Cell">
        <title>A tissue-specific atlas of mouse protein phosphorylation and expression.</title>
        <authorList>
            <person name="Huttlin E.L."/>
            <person name="Jedrychowski M.P."/>
            <person name="Elias J.E."/>
            <person name="Goswami T."/>
            <person name="Rad R."/>
            <person name="Beausoleil S.A."/>
            <person name="Villen J."/>
            <person name="Haas W."/>
            <person name="Sowa M.E."/>
            <person name="Gygi S.P."/>
        </authorList>
    </citation>
    <scope>IDENTIFICATION BY MASS SPECTROMETRY [LARGE SCALE ANALYSIS]</scope>
    <source>
        <tissue>Brown adipose tissue</tissue>
        <tissue>Liver</tissue>
        <tissue>Lung</tissue>
        <tissue>Pancreas</tissue>
    </source>
</reference>
<protein>
    <recommendedName>
        <fullName>SEC14-like protein 4</fullName>
    </recommendedName>
</protein>
<feature type="chain" id="PRO_0000210761" description="SEC14-like protein 4">
    <location>
        <begin position="1"/>
        <end position="403"/>
    </location>
</feature>
<feature type="domain" description="CRAL-TRIO" evidence="2">
    <location>
        <begin position="76"/>
        <end position="249"/>
    </location>
</feature>
<feature type="domain" description="GOLD" evidence="3">
    <location>
        <begin position="275"/>
        <end position="383"/>
    </location>
</feature>
<organism>
    <name type="scientific">Mus musculus</name>
    <name type="common">Mouse</name>
    <dbReference type="NCBI Taxonomy" id="10090"/>
    <lineage>
        <taxon>Eukaryota</taxon>
        <taxon>Metazoa</taxon>
        <taxon>Chordata</taxon>
        <taxon>Craniata</taxon>
        <taxon>Vertebrata</taxon>
        <taxon>Euteleostomi</taxon>
        <taxon>Mammalia</taxon>
        <taxon>Eutheria</taxon>
        <taxon>Euarchontoglires</taxon>
        <taxon>Glires</taxon>
        <taxon>Rodentia</taxon>
        <taxon>Myomorpha</taxon>
        <taxon>Muroidea</taxon>
        <taxon>Muridae</taxon>
        <taxon>Murinae</taxon>
        <taxon>Mus</taxon>
        <taxon>Mus</taxon>
    </lineage>
</organism>